<dbReference type="EC" id="3.2.2.-"/>
<dbReference type="EC" id="4.2.99.18"/>
<dbReference type="EMBL" id="AC107065">
    <property type="status" value="NOT_ANNOTATED_CDS"/>
    <property type="molecule type" value="Genomic_DNA"/>
</dbReference>
<dbReference type="EMBL" id="BN000316">
    <property type="protein sequence ID" value="CAE48362.1"/>
    <property type="molecule type" value="mRNA"/>
</dbReference>
<dbReference type="RefSeq" id="NP_001013021.1">
    <property type="nucleotide sequence ID" value="NM_001013003.1"/>
</dbReference>
<dbReference type="RefSeq" id="XP_005209884.1">
    <property type="nucleotide sequence ID" value="XM_005209827.5"/>
</dbReference>
<dbReference type="RefSeq" id="XP_010806002.1">
    <property type="nucleotide sequence ID" value="XM_010807700.4"/>
</dbReference>
<dbReference type="SMR" id="Q6IE77"/>
<dbReference type="FunCoup" id="Q6IE77">
    <property type="interactions" value="360"/>
</dbReference>
<dbReference type="STRING" id="9913.ENSBTAP00000006262"/>
<dbReference type="PaxDb" id="9913-ENSBTAP00000006262"/>
<dbReference type="Ensembl" id="ENSBTAT00000006262.4">
    <property type="protein sequence ID" value="ENSBTAP00000006262.2"/>
    <property type="gene ID" value="ENSBTAG00000004769.4"/>
</dbReference>
<dbReference type="GeneID" id="444987"/>
<dbReference type="KEGG" id="bta:444987"/>
<dbReference type="CTD" id="252969"/>
<dbReference type="VEuPathDB" id="HostDB:ENSBTAG00000004769"/>
<dbReference type="VGNC" id="VGNC:31989">
    <property type="gene designation" value="NEIL2"/>
</dbReference>
<dbReference type="eggNOG" id="ENOG502RIIB">
    <property type="taxonomic scope" value="Eukaryota"/>
</dbReference>
<dbReference type="GeneTree" id="ENSGT00940000153230"/>
<dbReference type="HOGENOM" id="CLU_072818_0_0_1"/>
<dbReference type="InParanoid" id="Q6IE77"/>
<dbReference type="OMA" id="LTWWCPH"/>
<dbReference type="OrthoDB" id="444592at2759"/>
<dbReference type="TreeFam" id="TF331502"/>
<dbReference type="Reactome" id="R-BTA-110329">
    <property type="pathway name" value="Cleavage of the damaged pyrimidine"/>
</dbReference>
<dbReference type="Reactome" id="R-BTA-5649702">
    <property type="pathway name" value="APEX1-Independent Resolution of AP Sites via the Single Nucleotide Replacement Pathway"/>
</dbReference>
<dbReference type="Proteomes" id="UP000009136">
    <property type="component" value="Chromosome 8"/>
</dbReference>
<dbReference type="Bgee" id="ENSBTAG00000004769">
    <property type="expression patterns" value="Expressed in oocyte and 104 other cell types or tissues"/>
</dbReference>
<dbReference type="GO" id="GO:0005634">
    <property type="term" value="C:nucleus"/>
    <property type="evidence" value="ECO:0000318"/>
    <property type="project" value="GO_Central"/>
</dbReference>
<dbReference type="GO" id="GO:0140078">
    <property type="term" value="F:class I DNA-(apurinic or apyrimidinic site) endonuclease activity"/>
    <property type="evidence" value="ECO:0007669"/>
    <property type="project" value="UniProtKB-EC"/>
</dbReference>
<dbReference type="GO" id="GO:0003684">
    <property type="term" value="F:damaged DNA binding"/>
    <property type="evidence" value="ECO:0007669"/>
    <property type="project" value="InterPro"/>
</dbReference>
<dbReference type="GO" id="GO:0019104">
    <property type="term" value="F:DNA N-glycosylase activity"/>
    <property type="evidence" value="ECO:0007669"/>
    <property type="project" value="InterPro"/>
</dbReference>
<dbReference type="GO" id="GO:0008270">
    <property type="term" value="F:zinc ion binding"/>
    <property type="evidence" value="ECO:0007669"/>
    <property type="project" value="UniProtKB-KW"/>
</dbReference>
<dbReference type="GO" id="GO:0006284">
    <property type="term" value="P:base-excision repair"/>
    <property type="evidence" value="ECO:0007669"/>
    <property type="project" value="InterPro"/>
</dbReference>
<dbReference type="CDD" id="cd08968">
    <property type="entry name" value="MeNeil2_N"/>
    <property type="match status" value="1"/>
</dbReference>
<dbReference type="FunFam" id="1.10.8.50:FF:000010">
    <property type="entry name" value="endonuclease 8-like 2"/>
    <property type="match status" value="1"/>
</dbReference>
<dbReference type="Gene3D" id="1.10.8.50">
    <property type="match status" value="1"/>
</dbReference>
<dbReference type="InterPro" id="IPR015886">
    <property type="entry name" value="DNA_glyclase/AP_lyase_DNA-bd"/>
</dbReference>
<dbReference type="InterPro" id="IPR012319">
    <property type="entry name" value="FPG_cat"/>
</dbReference>
<dbReference type="InterPro" id="IPR010979">
    <property type="entry name" value="Ribosomal_uS13-like_H2TH"/>
</dbReference>
<dbReference type="InterPro" id="IPR000214">
    <property type="entry name" value="Znf_DNA_glyclase/AP_lyase"/>
</dbReference>
<dbReference type="PANTHER" id="PTHR22993:SF29">
    <property type="entry name" value="ENDONUCLEASE 8-LIKE 2"/>
    <property type="match status" value="1"/>
</dbReference>
<dbReference type="PANTHER" id="PTHR22993">
    <property type="entry name" value="FORMAMIDOPYRIMIDINE-DNA GLYCOSYLASE"/>
    <property type="match status" value="1"/>
</dbReference>
<dbReference type="Pfam" id="PF06831">
    <property type="entry name" value="H2TH"/>
    <property type="match status" value="1"/>
</dbReference>
<dbReference type="SMART" id="SM01232">
    <property type="entry name" value="H2TH"/>
    <property type="match status" value="1"/>
</dbReference>
<dbReference type="SUPFAM" id="SSF46946">
    <property type="entry name" value="S13-like H2TH domain"/>
    <property type="match status" value="1"/>
</dbReference>
<dbReference type="PROSITE" id="PS51068">
    <property type="entry name" value="FPG_CAT"/>
    <property type="match status" value="1"/>
</dbReference>
<dbReference type="PROSITE" id="PS51066">
    <property type="entry name" value="ZF_FPG_2"/>
    <property type="match status" value="1"/>
</dbReference>
<gene>
    <name type="primary">NEIL2</name>
</gene>
<feature type="initiator methionine" description="Removed" evidence="1">
    <location>
        <position position="1"/>
    </location>
</feature>
<feature type="chain" id="PRO_0000170907" description="Endonuclease 8-like 2">
    <location>
        <begin position="2"/>
        <end position="329"/>
    </location>
</feature>
<feature type="zinc finger region" description="FPG-type" evidence="3">
    <location>
        <begin position="280"/>
        <end position="316"/>
    </location>
</feature>
<feature type="region of interest" description="Disordered" evidence="5">
    <location>
        <begin position="68"/>
        <end position="116"/>
    </location>
</feature>
<feature type="compositionally biased region" description="Basic and acidic residues" evidence="5">
    <location>
        <begin position="73"/>
        <end position="89"/>
    </location>
</feature>
<feature type="compositionally biased region" description="Low complexity" evidence="5">
    <location>
        <begin position="90"/>
        <end position="102"/>
    </location>
</feature>
<feature type="active site" description="Schiff-base intermediate with DNA" evidence="4">
    <location>
        <position position="2"/>
    </location>
</feature>
<feature type="active site" description="Proton donor" evidence="4">
    <location>
        <position position="3"/>
    </location>
</feature>
<feature type="active site" description="Proton donor; for beta-elimination activity" evidence="4">
    <location>
        <position position="50"/>
    </location>
</feature>
<feature type="active site" description="Proton donor; for delta-elimination activity" evidence="4">
    <location>
        <position position="306"/>
    </location>
</feature>
<feature type="binding site" evidence="1">
    <location>
        <position position="227"/>
    </location>
    <ligand>
        <name>DNA</name>
        <dbReference type="ChEBI" id="CHEBI:16991"/>
    </ligand>
</feature>
<feature type="modified residue" description="N6-acetyllysine" evidence="2">
    <location>
        <position position="50"/>
    </location>
</feature>
<feature type="modified residue" description="Phosphoserine" evidence="2">
    <location>
        <position position="68"/>
    </location>
</feature>
<feature type="modified residue" description="N6-acetyllysine" evidence="2">
    <location>
        <position position="149"/>
    </location>
</feature>
<name>NEIL2_BOVIN</name>
<keyword id="KW-0007">Acetylation</keyword>
<keyword id="KW-0227">DNA damage</keyword>
<keyword id="KW-0234">DNA repair</keyword>
<keyword id="KW-0238">DNA-binding</keyword>
<keyword id="KW-0326">Glycosidase</keyword>
<keyword id="KW-0378">Hydrolase</keyword>
<keyword id="KW-0456">Lyase</keyword>
<keyword id="KW-0479">Metal-binding</keyword>
<keyword id="KW-0511">Multifunctional enzyme</keyword>
<keyword id="KW-0539">Nucleus</keyword>
<keyword id="KW-0597">Phosphoprotein</keyword>
<keyword id="KW-1185">Reference proteome</keyword>
<keyword id="KW-0862">Zinc</keyword>
<keyword id="KW-0863">Zinc-finger</keyword>
<proteinExistence type="evidence at transcript level"/>
<sequence>MPEGPSVRKFHHLVSPFVGQQVVKTGGSSKKLNPTSFQSLWLQDSQVHGKKLFLRFDPDEEAVSLGNSLLSEPLREGEQKDKARHHQEASDPSSWSPGGDSAVPSGDDGLQCLGGDTPAGGAERWLQVSFGLFGSIRVNEFSRAKKANKRGDWRDPVPRLVLHFSGSGFLAFYNCQMTWRFSSPVVSPASDILSEKFHRGQALEALGREQPICYTLLDQRYFSGLGNIIKNEALFRAGIHPLSPGSLLGLPRLEALVDHVVAFSADWLQGKFQGTRQHTQIYQKEQCPAGHQVVRESLGPPGGFQRLTWWCPQCQPRLSADEPKQLQPS</sequence>
<organism>
    <name type="scientific">Bos taurus</name>
    <name type="common">Bovine</name>
    <dbReference type="NCBI Taxonomy" id="9913"/>
    <lineage>
        <taxon>Eukaryota</taxon>
        <taxon>Metazoa</taxon>
        <taxon>Chordata</taxon>
        <taxon>Craniata</taxon>
        <taxon>Vertebrata</taxon>
        <taxon>Euteleostomi</taxon>
        <taxon>Mammalia</taxon>
        <taxon>Eutheria</taxon>
        <taxon>Laurasiatheria</taxon>
        <taxon>Artiodactyla</taxon>
        <taxon>Ruminantia</taxon>
        <taxon>Pecora</taxon>
        <taxon>Bovidae</taxon>
        <taxon>Bovinae</taxon>
        <taxon>Bos</taxon>
    </lineage>
</organism>
<protein>
    <recommendedName>
        <fullName>Endonuclease 8-like 2</fullName>
        <ecNumber>3.2.2.-</ecNumber>
        <ecNumber>4.2.99.18</ecNumber>
    </recommendedName>
    <alternativeName>
        <fullName>DNA glycosylase/AP lyase Neil2</fullName>
    </alternativeName>
    <alternativeName>
        <fullName>DNA-(apurinic or apyrimidinic site) lyase Neil2</fullName>
    </alternativeName>
    <alternativeName>
        <fullName>Endonuclease VIII-like 2</fullName>
    </alternativeName>
    <alternativeName>
        <fullName>Nei homolog 2</fullName>
        <shortName>NEH2</shortName>
    </alternativeName>
    <alternativeName>
        <fullName>Nei-like protein 2</fullName>
    </alternativeName>
</protein>
<reference key="1">
    <citation type="journal article" date="2009" name="Science">
        <title>The genome sequence of taurine cattle: a window to ruminant biology and evolution.</title>
        <authorList>
            <consortium name="The bovine genome sequencing and analysis consortium"/>
        </authorList>
    </citation>
    <scope>NUCLEOTIDE SEQUENCE [LARGE SCALE GENOMIC DNA]</scope>
    <source>
        <strain>Hereford</strain>
    </source>
</reference>
<reference key="2">
    <citation type="journal article" date="2004" name="Anim. Genet.">
        <title>Mapping of the GATA4, NEIL2, FDFT1 genes and CTSB-associated microsatellites to the centromeric region of BTA8.</title>
        <authorList>
            <person name="Plis-Finarov A."/>
            <person name="Hudson H."/>
            <person name="Roe B."/>
            <person name="Ron M."/>
            <person name="Seroussi E."/>
        </authorList>
    </citation>
    <scope>IDENTIFICATION</scope>
</reference>
<evidence type="ECO:0000250" key="1"/>
<evidence type="ECO:0000250" key="2">
    <source>
        <dbReference type="UniProtKB" id="Q969S2"/>
    </source>
</evidence>
<evidence type="ECO:0000255" key="3">
    <source>
        <dbReference type="PROSITE-ProRule" id="PRU00391"/>
    </source>
</evidence>
<evidence type="ECO:0000255" key="4">
    <source>
        <dbReference type="PROSITE-ProRule" id="PRU00392"/>
    </source>
</evidence>
<evidence type="ECO:0000256" key="5">
    <source>
        <dbReference type="SAM" id="MobiDB-lite"/>
    </source>
</evidence>
<comment type="function">
    <text evidence="1">Involved in base excision repair of DNA damaged by oxidation or by mutagenic agents. Has DNA glycosylase activity towards 5-hydroxyuracil and other oxidized derivatives of cytosine with a preference for mismatched double-stranded DNA (DNA bubbles). Has low or no DNA glycosylase activity towards thymine glycol, 2-hydroxyadenine, hypoxanthine and 8-oxoguanine. Has AP (apurinic/apyrimidinic) lyase activity and introduces nicks in the DNA strand. Cleaves the DNA backbone by beta-delta elimination to generate a single-strand break at the site of the removed base with both 3'- and 5'-phosphates (By similarity).</text>
</comment>
<comment type="catalytic activity">
    <reaction evidence="4">
        <text>2'-deoxyribonucleotide-(2'-deoxyribose 5'-phosphate)-2'-deoxyribonucleotide-DNA = a 3'-end 2'-deoxyribonucleotide-(2,3-dehydro-2,3-deoxyribose 5'-phosphate)-DNA + a 5'-end 5'-phospho-2'-deoxyribonucleoside-DNA + H(+)</text>
        <dbReference type="Rhea" id="RHEA:66592"/>
        <dbReference type="Rhea" id="RHEA-COMP:13180"/>
        <dbReference type="Rhea" id="RHEA-COMP:16897"/>
        <dbReference type="Rhea" id="RHEA-COMP:17067"/>
        <dbReference type="ChEBI" id="CHEBI:15378"/>
        <dbReference type="ChEBI" id="CHEBI:136412"/>
        <dbReference type="ChEBI" id="CHEBI:157695"/>
        <dbReference type="ChEBI" id="CHEBI:167181"/>
        <dbReference type="EC" id="4.2.99.18"/>
    </reaction>
</comment>
<comment type="activity regulation">
    <text evidence="1">Acetylation of Lys-50 leads to loss of DNA nicking activity.</text>
</comment>
<comment type="subunit">
    <text evidence="1">Binds EP300.</text>
</comment>
<comment type="subcellular location">
    <subcellularLocation>
        <location evidence="1">Nucleus</location>
    </subcellularLocation>
</comment>
<comment type="domain">
    <text>The zinc-finger domain is important for DNA binding.</text>
</comment>
<comment type="similarity">
    <text evidence="4">Belongs to the FPG family.</text>
</comment>
<accession>Q6IE77</accession>